<gene>
    <name evidence="1" type="primary">hisF</name>
    <name type="ordered locus">PPA1376</name>
</gene>
<dbReference type="EC" id="4.3.2.10" evidence="1"/>
<dbReference type="EMBL" id="AE017283">
    <property type="protein sequence ID" value="AAT83127.1"/>
    <property type="molecule type" value="Genomic_DNA"/>
</dbReference>
<dbReference type="SMR" id="Q6A7Y8"/>
<dbReference type="EnsemblBacteria" id="AAT83127">
    <property type="protein sequence ID" value="AAT83127"/>
    <property type="gene ID" value="PPA1376"/>
</dbReference>
<dbReference type="KEGG" id="pac:PPA1376"/>
<dbReference type="eggNOG" id="COG0107">
    <property type="taxonomic scope" value="Bacteria"/>
</dbReference>
<dbReference type="HOGENOM" id="CLU_048577_4_0_11"/>
<dbReference type="UniPathway" id="UPA00031">
    <property type="reaction ID" value="UER00010"/>
</dbReference>
<dbReference type="Proteomes" id="UP000000603">
    <property type="component" value="Chromosome"/>
</dbReference>
<dbReference type="GO" id="GO:0005737">
    <property type="term" value="C:cytoplasm"/>
    <property type="evidence" value="ECO:0007669"/>
    <property type="project" value="UniProtKB-SubCell"/>
</dbReference>
<dbReference type="GO" id="GO:0000107">
    <property type="term" value="F:imidazoleglycerol-phosphate synthase activity"/>
    <property type="evidence" value="ECO:0007669"/>
    <property type="project" value="UniProtKB-UniRule"/>
</dbReference>
<dbReference type="GO" id="GO:0016829">
    <property type="term" value="F:lyase activity"/>
    <property type="evidence" value="ECO:0007669"/>
    <property type="project" value="UniProtKB-KW"/>
</dbReference>
<dbReference type="GO" id="GO:0000105">
    <property type="term" value="P:L-histidine biosynthetic process"/>
    <property type="evidence" value="ECO:0007669"/>
    <property type="project" value="UniProtKB-UniRule"/>
</dbReference>
<dbReference type="CDD" id="cd04731">
    <property type="entry name" value="HisF"/>
    <property type="match status" value="1"/>
</dbReference>
<dbReference type="Gene3D" id="3.20.20.70">
    <property type="entry name" value="Aldolase class I"/>
    <property type="match status" value="1"/>
</dbReference>
<dbReference type="HAMAP" id="MF_01013">
    <property type="entry name" value="HisF"/>
    <property type="match status" value="1"/>
</dbReference>
<dbReference type="InterPro" id="IPR013785">
    <property type="entry name" value="Aldolase_TIM"/>
</dbReference>
<dbReference type="InterPro" id="IPR006062">
    <property type="entry name" value="His_biosynth"/>
</dbReference>
<dbReference type="InterPro" id="IPR004651">
    <property type="entry name" value="HisF"/>
</dbReference>
<dbReference type="InterPro" id="IPR050064">
    <property type="entry name" value="IGPS_HisA/HisF"/>
</dbReference>
<dbReference type="InterPro" id="IPR011060">
    <property type="entry name" value="RibuloseP-bd_barrel"/>
</dbReference>
<dbReference type="NCBIfam" id="TIGR00735">
    <property type="entry name" value="hisF"/>
    <property type="match status" value="1"/>
</dbReference>
<dbReference type="PANTHER" id="PTHR21235:SF2">
    <property type="entry name" value="IMIDAZOLE GLYCEROL PHOSPHATE SYNTHASE HISHF"/>
    <property type="match status" value="1"/>
</dbReference>
<dbReference type="PANTHER" id="PTHR21235">
    <property type="entry name" value="IMIDAZOLE GLYCEROL PHOSPHATE SYNTHASE SUBUNIT HISF/H IGP SYNTHASE SUBUNIT HISF/H"/>
    <property type="match status" value="1"/>
</dbReference>
<dbReference type="Pfam" id="PF00977">
    <property type="entry name" value="His_biosynth"/>
    <property type="match status" value="1"/>
</dbReference>
<dbReference type="SUPFAM" id="SSF51366">
    <property type="entry name" value="Ribulose-phoshate binding barrel"/>
    <property type="match status" value="1"/>
</dbReference>
<name>HIS6_CUTAK</name>
<evidence type="ECO:0000255" key="1">
    <source>
        <dbReference type="HAMAP-Rule" id="MF_01013"/>
    </source>
</evidence>
<keyword id="KW-0028">Amino-acid biosynthesis</keyword>
<keyword id="KW-0963">Cytoplasm</keyword>
<keyword id="KW-0368">Histidine biosynthesis</keyword>
<keyword id="KW-0456">Lyase</keyword>
<proteinExistence type="inferred from homology"/>
<reference key="1">
    <citation type="journal article" date="2004" name="Science">
        <title>The complete genome sequence of Propionibacterium acnes, a commensal of human skin.</title>
        <authorList>
            <person name="Brueggemann H."/>
            <person name="Henne A."/>
            <person name="Hoster F."/>
            <person name="Liesegang H."/>
            <person name="Wiezer A."/>
            <person name="Strittmatter A."/>
            <person name="Hujer S."/>
            <person name="Duerre P."/>
            <person name="Gottschalk G."/>
        </authorList>
    </citation>
    <scope>NUCLEOTIDE SEQUENCE [LARGE SCALE GENOMIC DNA]</scope>
    <source>
        <strain>DSM 16379 / KPA171202</strain>
    </source>
</reference>
<sequence length="251" mass="26141">MAIRVIPCLDVKDGRVVKGVNFVGLRDAGDPVELAAEYGRLGADEVTFLDISASTEGRATTREMVTRCAETVFVPLTVGGGVRGVDDVDVLLRAGADKVGVNTAAIAHPGMIDEVADRFGNQVIVLSVDARREPDRPSGFGVTTHGGTRSAGLDAVEWACQAVERGAGEILLNSMDADGTADGFDIEMIEAVRAAVDVPLIASGGAGKVADFVEAARAGVDAVLAASVFHYHTLTIAQIKDGLRHAGFEVR</sequence>
<protein>
    <recommendedName>
        <fullName evidence="1">Imidazole glycerol phosphate synthase subunit HisF</fullName>
        <ecNumber evidence="1">4.3.2.10</ecNumber>
    </recommendedName>
    <alternativeName>
        <fullName evidence="1">IGP synthase cyclase subunit</fullName>
    </alternativeName>
    <alternativeName>
        <fullName evidence="1">IGP synthase subunit HisF</fullName>
    </alternativeName>
    <alternativeName>
        <fullName evidence="1">ImGP synthase subunit HisF</fullName>
        <shortName evidence="1">IGPS subunit HisF</shortName>
    </alternativeName>
</protein>
<feature type="chain" id="PRO_0000142204" description="Imidazole glycerol phosphate synthase subunit HisF">
    <location>
        <begin position="1"/>
        <end position="251"/>
    </location>
</feature>
<feature type="active site" evidence="1">
    <location>
        <position position="10"/>
    </location>
</feature>
<feature type="active site" evidence="1">
    <location>
        <position position="129"/>
    </location>
</feature>
<accession>Q6A7Y8</accession>
<organism>
    <name type="scientific">Cutibacterium acnes (strain DSM 16379 / KPA171202)</name>
    <name type="common">Propionibacterium acnes</name>
    <dbReference type="NCBI Taxonomy" id="267747"/>
    <lineage>
        <taxon>Bacteria</taxon>
        <taxon>Bacillati</taxon>
        <taxon>Actinomycetota</taxon>
        <taxon>Actinomycetes</taxon>
        <taxon>Propionibacteriales</taxon>
        <taxon>Propionibacteriaceae</taxon>
        <taxon>Cutibacterium</taxon>
    </lineage>
</organism>
<comment type="function">
    <text evidence="1">IGPS catalyzes the conversion of PRFAR and glutamine to IGP, AICAR and glutamate. The HisF subunit catalyzes the cyclization activity that produces IGP and AICAR from PRFAR using the ammonia provided by the HisH subunit.</text>
</comment>
<comment type="catalytic activity">
    <reaction evidence="1">
        <text>5-[(5-phospho-1-deoxy-D-ribulos-1-ylimino)methylamino]-1-(5-phospho-beta-D-ribosyl)imidazole-4-carboxamide + L-glutamine = D-erythro-1-(imidazol-4-yl)glycerol 3-phosphate + 5-amino-1-(5-phospho-beta-D-ribosyl)imidazole-4-carboxamide + L-glutamate + H(+)</text>
        <dbReference type="Rhea" id="RHEA:24793"/>
        <dbReference type="ChEBI" id="CHEBI:15378"/>
        <dbReference type="ChEBI" id="CHEBI:29985"/>
        <dbReference type="ChEBI" id="CHEBI:58278"/>
        <dbReference type="ChEBI" id="CHEBI:58359"/>
        <dbReference type="ChEBI" id="CHEBI:58475"/>
        <dbReference type="ChEBI" id="CHEBI:58525"/>
        <dbReference type="EC" id="4.3.2.10"/>
    </reaction>
</comment>
<comment type="pathway">
    <text evidence="1">Amino-acid biosynthesis; L-histidine biosynthesis; L-histidine from 5-phospho-alpha-D-ribose 1-diphosphate: step 5/9.</text>
</comment>
<comment type="subunit">
    <text evidence="1">Heterodimer of HisH and HisF.</text>
</comment>
<comment type="subcellular location">
    <subcellularLocation>
        <location evidence="1">Cytoplasm</location>
    </subcellularLocation>
</comment>
<comment type="similarity">
    <text evidence="1">Belongs to the HisA/HisF family.</text>
</comment>